<dbReference type="EMBL" id="CP001100">
    <property type="protein sequence ID" value="ACF13562.1"/>
    <property type="molecule type" value="Genomic_DNA"/>
</dbReference>
<dbReference type="RefSeq" id="WP_012499646.1">
    <property type="nucleotide sequence ID" value="NC_011026.1"/>
</dbReference>
<dbReference type="SMR" id="B3QYD4"/>
<dbReference type="STRING" id="517418.Ctha_1098"/>
<dbReference type="KEGG" id="cts:Ctha_1098"/>
<dbReference type="eggNOG" id="COG0093">
    <property type="taxonomic scope" value="Bacteria"/>
</dbReference>
<dbReference type="HOGENOM" id="CLU_095071_2_1_10"/>
<dbReference type="OrthoDB" id="9806379at2"/>
<dbReference type="Proteomes" id="UP000001208">
    <property type="component" value="Chromosome"/>
</dbReference>
<dbReference type="GO" id="GO:0022625">
    <property type="term" value="C:cytosolic large ribosomal subunit"/>
    <property type="evidence" value="ECO:0007669"/>
    <property type="project" value="TreeGrafter"/>
</dbReference>
<dbReference type="GO" id="GO:0070180">
    <property type="term" value="F:large ribosomal subunit rRNA binding"/>
    <property type="evidence" value="ECO:0007669"/>
    <property type="project" value="TreeGrafter"/>
</dbReference>
<dbReference type="GO" id="GO:0003735">
    <property type="term" value="F:structural constituent of ribosome"/>
    <property type="evidence" value="ECO:0007669"/>
    <property type="project" value="InterPro"/>
</dbReference>
<dbReference type="GO" id="GO:0006412">
    <property type="term" value="P:translation"/>
    <property type="evidence" value="ECO:0007669"/>
    <property type="project" value="UniProtKB-UniRule"/>
</dbReference>
<dbReference type="CDD" id="cd00337">
    <property type="entry name" value="Ribosomal_uL14"/>
    <property type="match status" value="1"/>
</dbReference>
<dbReference type="FunFam" id="2.40.150.20:FF:000001">
    <property type="entry name" value="50S ribosomal protein L14"/>
    <property type="match status" value="1"/>
</dbReference>
<dbReference type="Gene3D" id="2.40.150.20">
    <property type="entry name" value="Ribosomal protein L14"/>
    <property type="match status" value="1"/>
</dbReference>
<dbReference type="HAMAP" id="MF_01367">
    <property type="entry name" value="Ribosomal_uL14"/>
    <property type="match status" value="1"/>
</dbReference>
<dbReference type="InterPro" id="IPR000218">
    <property type="entry name" value="Ribosomal_uL14"/>
</dbReference>
<dbReference type="InterPro" id="IPR005745">
    <property type="entry name" value="Ribosomal_uL14_bac-type"/>
</dbReference>
<dbReference type="InterPro" id="IPR019972">
    <property type="entry name" value="Ribosomal_uL14_CS"/>
</dbReference>
<dbReference type="InterPro" id="IPR036853">
    <property type="entry name" value="Ribosomal_uL14_sf"/>
</dbReference>
<dbReference type="NCBIfam" id="TIGR01067">
    <property type="entry name" value="rplN_bact"/>
    <property type="match status" value="1"/>
</dbReference>
<dbReference type="PANTHER" id="PTHR11761">
    <property type="entry name" value="50S/60S RIBOSOMAL PROTEIN L14/L23"/>
    <property type="match status" value="1"/>
</dbReference>
<dbReference type="PANTHER" id="PTHR11761:SF3">
    <property type="entry name" value="LARGE RIBOSOMAL SUBUNIT PROTEIN UL14M"/>
    <property type="match status" value="1"/>
</dbReference>
<dbReference type="Pfam" id="PF00238">
    <property type="entry name" value="Ribosomal_L14"/>
    <property type="match status" value="1"/>
</dbReference>
<dbReference type="SMART" id="SM01374">
    <property type="entry name" value="Ribosomal_L14"/>
    <property type="match status" value="1"/>
</dbReference>
<dbReference type="SUPFAM" id="SSF50193">
    <property type="entry name" value="Ribosomal protein L14"/>
    <property type="match status" value="1"/>
</dbReference>
<dbReference type="PROSITE" id="PS00049">
    <property type="entry name" value="RIBOSOMAL_L14"/>
    <property type="match status" value="1"/>
</dbReference>
<sequence>MIQKETDLMVADNSGAKRVRCIHVLGGTGRRYATIGDMIVVSVKSAIPGGAVKKKDVSKAVVVRTKKEYRRKDGSYIRFDENAVVLLNTQGEPRGTRIFGPVARELRDKQYMKIISLAPEVI</sequence>
<gene>
    <name evidence="1" type="primary">rplN</name>
    <name type="ordered locus">Ctha_1098</name>
</gene>
<feature type="chain" id="PRO_1000144242" description="Large ribosomal subunit protein uL14">
    <location>
        <begin position="1"/>
        <end position="122"/>
    </location>
</feature>
<evidence type="ECO:0000255" key="1">
    <source>
        <dbReference type="HAMAP-Rule" id="MF_01367"/>
    </source>
</evidence>
<evidence type="ECO:0000305" key="2"/>
<comment type="function">
    <text evidence="1">Binds to 23S rRNA. Forms part of two intersubunit bridges in the 70S ribosome.</text>
</comment>
<comment type="subunit">
    <text evidence="1">Part of the 50S ribosomal subunit. Forms a cluster with proteins L3 and L19. In the 70S ribosome, L14 and L19 interact and together make contacts with the 16S rRNA in bridges B5 and B8.</text>
</comment>
<comment type="similarity">
    <text evidence="1">Belongs to the universal ribosomal protein uL14 family.</text>
</comment>
<accession>B3QYD4</accession>
<protein>
    <recommendedName>
        <fullName evidence="1">Large ribosomal subunit protein uL14</fullName>
    </recommendedName>
    <alternativeName>
        <fullName evidence="2">50S ribosomal protein L14</fullName>
    </alternativeName>
</protein>
<proteinExistence type="inferred from homology"/>
<reference key="1">
    <citation type="submission" date="2008-06" db="EMBL/GenBank/DDBJ databases">
        <title>Complete sequence of Chloroherpeton thalassium ATCC 35110.</title>
        <authorList>
            <consortium name="US DOE Joint Genome Institute"/>
            <person name="Lucas S."/>
            <person name="Copeland A."/>
            <person name="Lapidus A."/>
            <person name="Glavina del Rio T."/>
            <person name="Dalin E."/>
            <person name="Tice H."/>
            <person name="Bruce D."/>
            <person name="Goodwin L."/>
            <person name="Pitluck S."/>
            <person name="Schmutz J."/>
            <person name="Larimer F."/>
            <person name="Land M."/>
            <person name="Hauser L."/>
            <person name="Kyrpides N."/>
            <person name="Mikhailova N."/>
            <person name="Liu Z."/>
            <person name="Li T."/>
            <person name="Zhao F."/>
            <person name="Overmann J."/>
            <person name="Bryant D.A."/>
            <person name="Richardson P."/>
        </authorList>
    </citation>
    <scope>NUCLEOTIDE SEQUENCE [LARGE SCALE GENOMIC DNA]</scope>
    <source>
        <strain>ATCC 35110 / GB-78</strain>
    </source>
</reference>
<keyword id="KW-1185">Reference proteome</keyword>
<keyword id="KW-0687">Ribonucleoprotein</keyword>
<keyword id="KW-0689">Ribosomal protein</keyword>
<keyword id="KW-0694">RNA-binding</keyword>
<keyword id="KW-0699">rRNA-binding</keyword>
<name>RL14_CHLT3</name>
<organism>
    <name type="scientific">Chloroherpeton thalassium (strain ATCC 35110 / GB-78)</name>
    <dbReference type="NCBI Taxonomy" id="517418"/>
    <lineage>
        <taxon>Bacteria</taxon>
        <taxon>Pseudomonadati</taxon>
        <taxon>Chlorobiota</taxon>
        <taxon>Chlorobiia</taxon>
        <taxon>Chlorobiales</taxon>
        <taxon>Chloroherpetonaceae</taxon>
        <taxon>Chloroherpeton</taxon>
    </lineage>
</organism>